<comment type="function">
    <text evidence="1">Component of the 40S small ribosomal subunit (By similarity). Plays an important role in controlling cell growth and proliferation through the selective translation of particular classes of mRNA (By similarity).</text>
</comment>
<comment type="subunit">
    <text evidence="1">Component of the small ribosomal subunit.</text>
</comment>
<comment type="subcellular location">
    <subcellularLocation>
        <location evidence="1">Cytoplasm</location>
    </subcellularLocation>
</comment>
<comment type="PTM">
    <text evidence="1">Ribosomal protein S6 is the major substrate of protein kinases in eukaryote ribosomes. The phosphorylation is stimulated by growth factors, tumor promoting agents, and mitogens. It is dephosphorylated at growth arrest.</text>
</comment>
<comment type="similarity">
    <text evidence="3">Belongs to the eukaryotic ribosomal protein eS6 family.</text>
</comment>
<evidence type="ECO:0000250" key="1">
    <source>
        <dbReference type="UniProtKB" id="P62753"/>
    </source>
</evidence>
<evidence type="ECO:0000256" key="2">
    <source>
        <dbReference type="SAM" id="MobiDB-lite"/>
    </source>
</evidence>
<evidence type="ECO:0000305" key="3"/>
<accession>Q9YGF2</accession>
<keyword id="KW-0963">Cytoplasm</keyword>
<keyword id="KW-0597">Phosphoprotein</keyword>
<keyword id="KW-0687">Ribonucleoprotein</keyword>
<keyword id="KW-0689">Ribosomal protein</keyword>
<name>RS6_ONCMY</name>
<dbReference type="EMBL" id="AF009665">
    <property type="protein sequence ID" value="AAD01429.1"/>
    <property type="molecule type" value="mRNA"/>
</dbReference>
<dbReference type="RefSeq" id="NP_001117716.1">
    <property type="nucleotide sequence ID" value="NM_001124244.1"/>
</dbReference>
<dbReference type="SMR" id="Q9YGF2"/>
<dbReference type="GeneID" id="100135859"/>
<dbReference type="KEGG" id="omy:100135859"/>
<dbReference type="OrthoDB" id="10260596at2759"/>
<dbReference type="Proteomes" id="UP000694395">
    <property type="component" value="Unplaced"/>
</dbReference>
<dbReference type="GO" id="GO:0022627">
    <property type="term" value="C:cytosolic small ribosomal subunit"/>
    <property type="evidence" value="ECO:0000250"/>
    <property type="project" value="AgBase"/>
</dbReference>
<dbReference type="GO" id="GO:0005634">
    <property type="term" value="C:nucleus"/>
    <property type="evidence" value="ECO:0000250"/>
    <property type="project" value="AgBase"/>
</dbReference>
<dbReference type="GO" id="GO:0003735">
    <property type="term" value="F:structural constituent of ribosome"/>
    <property type="evidence" value="ECO:0007669"/>
    <property type="project" value="InterPro"/>
</dbReference>
<dbReference type="GO" id="GO:0002181">
    <property type="term" value="P:cytoplasmic translation"/>
    <property type="evidence" value="ECO:0000250"/>
    <property type="project" value="UniProtKB"/>
</dbReference>
<dbReference type="GO" id="GO:0042593">
    <property type="term" value="P:glucose homeostasis"/>
    <property type="evidence" value="ECO:0000250"/>
    <property type="project" value="AgBase"/>
</dbReference>
<dbReference type="FunFam" id="1.20.5.2650:FF:000001">
    <property type="entry name" value="40S ribosomal protein S6"/>
    <property type="match status" value="1"/>
</dbReference>
<dbReference type="Gene3D" id="1.20.5.2650">
    <property type="match status" value="1"/>
</dbReference>
<dbReference type="InterPro" id="IPR001377">
    <property type="entry name" value="Ribosomal_eS6"/>
</dbReference>
<dbReference type="InterPro" id="IPR014401">
    <property type="entry name" value="Ribosomal_eS6-like"/>
</dbReference>
<dbReference type="InterPro" id="IPR018282">
    <property type="entry name" value="Ribosomal_eS6_CS"/>
</dbReference>
<dbReference type="PANTHER" id="PTHR11502">
    <property type="entry name" value="40S RIBOSOMAL PROTEIN S6"/>
    <property type="match status" value="1"/>
</dbReference>
<dbReference type="Pfam" id="PF01092">
    <property type="entry name" value="Ribosomal_S6e"/>
    <property type="match status" value="1"/>
</dbReference>
<dbReference type="PIRSF" id="PIRSF002129">
    <property type="entry name" value="Ribosom_S6_euk"/>
    <property type="match status" value="1"/>
</dbReference>
<dbReference type="SMART" id="SM01405">
    <property type="entry name" value="Ribosomal_S6e"/>
    <property type="match status" value="1"/>
</dbReference>
<dbReference type="PROSITE" id="PS00578">
    <property type="entry name" value="RIBOSOMAL_S6E"/>
    <property type="match status" value="1"/>
</dbReference>
<sequence>MKLNISFPATGCQKLIEVDDERKLRTFYEKRMATEVAADPLGDEWKGYMVRISGGNDKQGFPMKQGVLTHGRVRLLLAKGHSCYRPRRTGERKRKSVRGCIGDANLSVLNLVIIKKGEKDIPGLTDSTVPRRLGPKRASKIRKLFNLAKEDDVRQYVVRRPLTKEGKKPRTKAPRIQRLVTPRVLQHKRRRIALKKQRTQKNKEEASEYAKLLAKRMKEAKEKRQEQIAKRRRLSSLRASTSKSESSQK</sequence>
<reference key="1">
    <citation type="submission" date="1997-06" db="EMBL/GenBank/DDBJ databases">
        <authorList>
            <person name="Poon K.-H."/>
        </authorList>
    </citation>
    <scope>NUCLEOTIDE SEQUENCE [MRNA]</scope>
    <source>
        <tissue>Midgut</tissue>
    </source>
</reference>
<gene>
    <name type="primary">rps6</name>
</gene>
<protein>
    <recommendedName>
        <fullName evidence="3">Small ribosomal subunit protein eS6</fullName>
    </recommendedName>
    <alternativeName>
        <fullName>40S ribosomal protein S6</fullName>
    </alternativeName>
</protein>
<organism>
    <name type="scientific">Oncorhynchus mykiss</name>
    <name type="common">Rainbow trout</name>
    <name type="synonym">Salmo gairdneri</name>
    <dbReference type="NCBI Taxonomy" id="8022"/>
    <lineage>
        <taxon>Eukaryota</taxon>
        <taxon>Metazoa</taxon>
        <taxon>Chordata</taxon>
        <taxon>Craniata</taxon>
        <taxon>Vertebrata</taxon>
        <taxon>Euteleostomi</taxon>
        <taxon>Actinopterygii</taxon>
        <taxon>Neopterygii</taxon>
        <taxon>Teleostei</taxon>
        <taxon>Protacanthopterygii</taxon>
        <taxon>Salmoniformes</taxon>
        <taxon>Salmonidae</taxon>
        <taxon>Salmoninae</taxon>
        <taxon>Oncorhynchus</taxon>
    </lineage>
</organism>
<feature type="chain" id="PRO_0000137317" description="Small ribosomal subunit protein eS6">
    <location>
        <begin position="1"/>
        <end position="249"/>
    </location>
</feature>
<feature type="region of interest" description="Disordered" evidence="2">
    <location>
        <begin position="216"/>
        <end position="249"/>
    </location>
</feature>
<feature type="compositionally biased region" description="Basic and acidic residues" evidence="2">
    <location>
        <begin position="216"/>
        <end position="229"/>
    </location>
</feature>
<feature type="compositionally biased region" description="Low complexity" evidence="2">
    <location>
        <begin position="236"/>
        <end position="249"/>
    </location>
</feature>
<feature type="modified residue" description="Phosphoserine" evidence="1">
    <location>
        <position position="235"/>
    </location>
</feature>
<feature type="modified residue" description="Phosphoserine" evidence="1">
    <location>
        <position position="236"/>
    </location>
</feature>
<feature type="modified residue" description="Phosphoserine" evidence="1">
    <location>
        <position position="240"/>
    </location>
</feature>
<feature type="modified residue" description="Phosphoserine" evidence="1">
    <location>
        <position position="244"/>
    </location>
</feature>
<feature type="modified residue" description="Phosphoserine" evidence="1">
    <location>
        <position position="247"/>
    </location>
</feature>
<proteinExistence type="evidence at transcript level"/>